<feature type="initiator methionine" description="Removed; by host" evidence="2">
    <location>
        <position position="1"/>
    </location>
</feature>
<feature type="chain" id="PRO_0000426506" description="Genome polyprotein">
    <location>
        <begin position="2"/>
        <end position="2150"/>
    </location>
</feature>
<feature type="chain" id="PRO_0000426507" description="P1">
    <location>
        <begin position="2"/>
        <end position="850"/>
    </location>
</feature>
<feature type="chain" id="PRO_0000426508" description="Capsid protein VP0">
    <location>
        <begin position="2"/>
        <end position="330"/>
    </location>
</feature>
<feature type="chain" id="PRO_0000426509" description="Capsid protein VP4">
    <location>
        <begin position="2"/>
        <end position="69"/>
    </location>
</feature>
<feature type="chain" id="PRO_0000426510" description="Capsid protein VP2">
    <location>
        <begin position="70"/>
        <end position="330"/>
    </location>
</feature>
<feature type="chain" id="PRO_0000426511" description="Capsid protein VP3">
    <location>
        <begin position="331"/>
        <end position="561"/>
    </location>
</feature>
<feature type="chain" id="PRO_0000426512" description="Capsid protein VP1">
    <location>
        <begin position="562"/>
        <end position="850"/>
    </location>
</feature>
<feature type="chain" id="PRO_0000426513" description="P2">
    <location>
        <begin position="851"/>
        <end position="1409"/>
    </location>
</feature>
<feature type="chain" id="PRO_0000426514" description="Protease 2A">
    <location>
        <begin position="851"/>
        <end position="992"/>
    </location>
</feature>
<feature type="chain" id="PRO_0000040015" description="Protein 2B">
    <location>
        <begin position="993"/>
        <end position="1087"/>
    </location>
</feature>
<feature type="chain" id="PRO_0000040016" description="Protein 2C">
    <location>
        <begin position="1088"/>
        <end position="1409"/>
    </location>
</feature>
<feature type="chain" id="PRO_0000426515" description="P3">
    <location>
        <begin position="1410"/>
        <end position="2150"/>
    </location>
</feature>
<feature type="chain" id="PRO_0000426516" description="Protein 3AB">
    <location>
        <begin position="1410"/>
        <end position="1507"/>
    </location>
</feature>
<feature type="chain" id="PRO_0000040017" description="Protein 3A">
    <location>
        <begin position="1410"/>
        <end position="1486"/>
    </location>
</feature>
<feature type="chain" id="PRO_0000426517" description="Viral protein genome-linked">
    <location>
        <begin position="1487"/>
        <end position="1507"/>
    </location>
</feature>
<feature type="chain" id="PRO_0000426518" description="Protein 3CD">
    <location>
        <begin position="1508"/>
        <end position="2150"/>
    </location>
</feature>
<feature type="chain" id="PRO_0000426519" description="Protease 3C">
    <location>
        <begin position="1508"/>
        <end position="1690"/>
    </location>
</feature>
<feature type="chain" id="PRO_0000426520" description="RNA-directed RNA polymerase">
    <location>
        <begin position="1691"/>
        <end position="2150"/>
    </location>
</feature>
<feature type="topological domain" description="Cytoplasmic" evidence="7">
    <location>
        <begin position="2"/>
        <end position="1463"/>
    </location>
</feature>
<feature type="intramembrane region" evidence="7">
    <location>
        <begin position="1464"/>
        <end position="1479"/>
    </location>
</feature>
<feature type="topological domain" description="Cytoplasmic" evidence="7">
    <location>
        <begin position="1480"/>
        <end position="2150"/>
    </location>
</feature>
<feature type="domain" description="SF3 helicase" evidence="9">
    <location>
        <begin position="1181"/>
        <end position="1343"/>
    </location>
</feature>
<feature type="domain" description="Peptidase C3" evidence="10">
    <location>
        <begin position="1508"/>
        <end position="1686"/>
    </location>
</feature>
<feature type="domain" description="RdRp catalytic" evidence="8">
    <location>
        <begin position="1918"/>
        <end position="2031"/>
    </location>
</feature>
<feature type="zinc finger region" description="C4-type; degenerate" evidence="1">
    <location>
        <begin position="1350"/>
        <end position="1366"/>
    </location>
</feature>
<feature type="region of interest" description="Amphipathic alpha-helix" evidence="7">
    <location>
        <begin position="565"/>
        <end position="581"/>
    </location>
</feature>
<feature type="region of interest" description="Disordered" evidence="11">
    <location>
        <begin position="592"/>
        <end position="611"/>
    </location>
</feature>
<feature type="region of interest" description="Oligomerization" evidence="2">
    <location>
        <begin position="1088"/>
        <end position="1221"/>
    </location>
</feature>
<feature type="region of interest" description="Membrane-binding" evidence="2">
    <location>
        <begin position="1088"/>
        <end position="1157"/>
    </location>
</feature>
<feature type="region of interest" description="RNA-binding" evidence="2">
    <location>
        <begin position="1109"/>
        <end position="1113"/>
    </location>
</feature>
<feature type="region of interest" description="RNA-binding" evidence="2">
    <location>
        <begin position="1393"/>
        <end position="1400"/>
    </location>
</feature>
<feature type="region of interest" description="Oligomerization" evidence="2">
    <location>
        <begin position="1404"/>
        <end position="1409"/>
    </location>
</feature>
<feature type="active site" description="For protease 2A activity" evidence="2">
    <location>
        <position position="868"/>
    </location>
</feature>
<feature type="active site" description="For protease 2A activity" evidence="2">
    <location>
        <position position="885"/>
    </location>
</feature>
<feature type="active site" description="For protease 2A activity" evidence="2">
    <location>
        <position position="956"/>
    </location>
</feature>
<feature type="active site" description="For protease 3C activity" evidence="10">
    <location>
        <position position="1547"/>
    </location>
</feature>
<feature type="active site" description="For protease 3C activity" evidence="10">
    <location>
        <position position="1578"/>
    </location>
</feature>
<feature type="active site" description="For protease 3C activity" evidence="10">
    <location>
        <position position="1654"/>
    </location>
</feature>
<feature type="binding site" evidence="15">
    <location>
        <position position="902"/>
    </location>
    <ligand>
        <name>Zn(2+)</name>
        <dbReference type="ChEBI" id="CHEBI:29105"/>
        <label>1</label>
        <note>structural</note>
    </ligand>
</feature>
<feature type="binding site" evidence="15">
    <location>
        <position position="904"/>
    </location>
    <ligand>
        <name>Zn(2+)</name>
        <dbReference type="ChEBI" id="CHEBI:29105"/>
        <label>1</label>
        <note>structural</note>
    </ligand>
</feature>
<feature type="binding site" evidence="15">
    <location>
        <position position="962"/>
    </location>
    <ligand>
        <name>Zn(2+)</name>
        <dbReference type="ChEBI" id="CHEBI:29105"/>
        <label>1</label>
        <note>structural</note>
    </ligand>
</feature>
<feature type="binding site" evidence="18">
    <location>
        <position position="964"/>
    </location>
    <ligand>
        <name>Zn(2+)</name>
        <dbReference type="ChEBI" id="CHEBI:29105"/>
        <label>1</label>
        <note>structural</note>
    </ligand>
</feature>
<feature type="binding site" evidence="1">
    <location>
        <position position="1350"/>
    </location>
    <ligand>
        <name>Zn(2+)</name>
        <dbReference type="ChEBI" id="CHEBI:29105"/>
        <label>2</label>
    </ligand>
</feature>
<feature type="binding site" evidence="1">
    <location>
        <position position="1361"/>
    </location>
    <ligand>
        <name>Zn(2+)</name>
        <dbReference type="ChEBI" id="CHEBI:29105"/>
        <label>2</label>
    </ligand>
</feature>
<feature type="binding site" evidence="1">
    <location>
        <position position="1366"/>
    </location>
    <ligand>
        <name>Zn(2+)</name>
        <dbReference type="ChEBI" id="CHEBI:29105"/>
        <label>2</label>
    </ligand>
</feature>
<feature type="binding site" evidence="2">
    <location>
        <position position="1924"/>
    </location>
    <ligand>
        <name>Mg(2+)</name>
        <dbReference type="ChEBI" id="CHEBI:18420"/>
        <label>1</label>
        <note>catalytic; for RdRp activity</note>
    </ligand>
</feature>
<feature type="binding site" evidence="2">
    <location>
        <position position="1924"/>
    </location>
    <ligand>
        <name>Mg(2+)</name>
        <dbReference type="ChEBI" id="CHEBI:18420"/>
        <label>2</label>
        <note>catalytic; for RdRp activity</note>
    </ligand>
</feature>
<feature type="binding site" evidence="2">
    <location>
        <position position="2017"/>
    </location>
    <ligand>
        <name>Mg(2+)</name>
        <dbReference type="ChEBI" id="CHEBI:18420"/>
        <label>1</label>
        <note>catalytic; for RdRp activity</note>
    </ligand>
</feature>
<feature type="binding site" evidence="2">
    <location>
        <position position="2017"/>
    </location>
    <ligand>
        <name>Mg(2+)</name>
        <dbReference type="ChEBI" id="CHEBI:18420"/>
        <label>2</label>
        <note>catalytic; for RdRp activity</note>
    </ligand>
</feature>
<feature type="site" description="Cleavage; by autolysis" evidence="2">
    <location>
        <begin position="69"/>
        <end position="70"/>
    </location>
</feature>
<feature type="site" description="Cleavage; by protease 3C" evidence="3">
    <location>
        <begin position="330"/>
        <end position="331"/>
    </location>
</feature>
<feature type="site" description="Cleavage; by autolysis" evidence="3">
    <location>
        <begin position="850"/>
        <end position="851"/>
    </location>
</feature>
<feature type="site" description="Cleavage; by protease 3C" evidence="3">
    <location>
        <begin position="992"/>
        <end position="993"/>
    </location>
</feature>
<feature type="site" description="Cleavage; by protease 3C" evidence="3">
    <location>
        <begin position="1087"/>
        <end position="1088"/>
    </location>
</feature>
<feature type="site" description="Involved in the interaction with host RTN3" evidence="6">
    <location>
        <position position="1112"/>
    </location>
</feature>
<feature type="site" description="Cleavage; by protease 3C" evidence="3">
    <location>
        <begin position="1409"/>
        <end position="1410"/>
    </location>
</feature>
<feature type="site" description="Cleavage; by protease 3C" evidence="3">
    <location>
        <begin position="1486"/>
        <end position="1487"/>
    </location>
</feature>
<feature type="site" description="Cleavage; by protease 3C" evidence="3">
    <location>
        <begin position="1507"/>
        <end position="1508"/>
    </location>
</feature>
<feature type="site" description="Cleavage; by protease 3C" evidence="3">
    <location>
        <begin position="1690"/>
        <end position="1691"/>
    </location>
</feature>
<feature type="modified residue" description="O-(5'-phospho-RNA)-tyrosine" evidence="2">
    <location>
        <position position="1489"/>
    </location>
</feature>
<feature type="lipid moiety-binding region" description="N-myristoyl glycine; by host" evidence="2">
    <location>
        <position position="2"/>
    </location>
</feature>
<feature type="strand" evidence="20">
    <location>
        <begin position="33"/>
        <end position="35"/>
    </location>
</feature>
<feature type="helix" evidence="20">
    <location>
        <begin position="36"/>
        <end position="38"/>
    </location>
</feature>
<feature type="turn" evidence="24">
    <location>
        <begin position="52"/>
        <end position="54"/>
    </location>
</feature>
<feature type="strand" evidence="20">
    <location>
        <begin position="83"/>
        <end position="86"/>
    </location>
</feature>
<feature type="strand" evidence="20">
    <location>
        <begin position="91"/>
        <end position="96"/>
    </location>
</feature>
<feature type="helix" evidence="20">
    <location>
        <begin position="103"/>
        <end position="105"/>
    </location>
</feature>
<feature type="turn" evidence="20">
    <location>
        <begin position="113"/>
        <end position="115"/>
    </location>
</feature>
<feature type="strand" evidence="23">
    <location>
        <begin position="117"/>
        <end position="119"/>
    </location>
</feature>
<feature type="helix" evidence="20">
    <location>
        <begin position="126"/>
        <end position="128"/>
    </location>
</feature>
<feature type="strand" evidence="20">
    <location>
        <begin position="138"/>
        <end position="140"/>
    </location>
</feature>
<feature type="strand" evidence="20">
    <location>
        <begin position="147"/>
        <end position="151"/>
    </location>
</feature>
<feature type="helix" evidence="20">
    <location>
        <begin position="153"/>
        <end position="155"/>
    </location>
</feature>
<feature type="helix" evidence="20">
    <location>
        <begin position="159"/>
        <end position="167"/>
    </location>
</feature>
<feature type="strand" evidence="20">
    <location>
        <begin position="168"/>
        <end position="180"/>
    </location>
</feature>
<feature type="strand" evidence="20">
    <location>
        <begin position="187"/>
        <end position="197"/>
    </location>
</feature>
<feature type="strand" evidence="20">
    <location>
        <begin position="203"/>
        <end position="208"/>
    </location>
</feature>
<feature type="helix" evidence="20">
    <location>
        <begin position="213"/>
        <end position="216"/>
    </location>
</feature>
<feature type="helix" evidence="20">
    <location>
        <begin position="219"/>
        <end position="221"/>
    </location>
</feature>
<feature type="helix" evidence="19">
    <location>
        <begin position="233"/>
        <end position="235"/>
    </location>
</feature>
<feature type="helix" evidence="20">
    <location>
        <begin position="241"/>
        <end position="243"/>
    </location>
</feature>
<feature type="turn" evidence="20">
    <location>
        <begin position="244"/>
        <end position="247"/>
    </location>
</feature>
<feature type="helix" evidence="20">
    <location>
        <begin position="253"/>
        <end position="255"/>
    </location>
</feature>
<feature type="strand" evidence="20">
    <location>
        <begin position="256"/>
        <end position="262"/>
    </location>
</feature>
<feature type="turn" evidence="20">
    <location>
        <begin position="263"/>
        <end position="265"/>
    </location>
</feature>
<feature type="strand" evidence="20">
    <location>
        <begin position="267"/>
        <end position="273"/>
    </location>
</feature>
<feature type="strand" evidence="20">
    <location>
        <begin position="278"/>
        <end position="282"/>
    </location>
</feature>
<feature type="turn" evidence="20">
    <location>
        <begin position="284"/>
        <end position="286"/>
    </location>
</feature>
<feature type="strand" evidence="20">
    <location>
        <begin position="290"/>
        <end position="305"/>
    </location>
</feature>
<feature type="strand" evidence="20">
    <location>
        <begin position="309"/>
        <end position="325"/>
    </location>
</feature>
<feature type="turn" evidence="20">
    <location>
        <begin position="338"/>
        <end position="341"/>
    </location>
</feature>
<feature type="strand" evidence="20">
    <location>
        <begin position="353"/>
        <end position="355"/>
    </location>
</feature>
<feature type="strand" evidence="22">
    <location>
        <begin position="367"/>
        <end position="372"/>
    </location>
</feature>
<feature type="helix" evidence="20">
    <location>
        <begin position="374"/>
        <end position="377"/>
    </location>
</feature>
<feature type="turn" evidence="20">
    <location>
        <begin position="389"/>
        <end position="393"/>
    </location>
</feature>
<feature type="helix" evidence="20">
    <location>
        <begin position="395"/>
        <end position="398"/>
    </location>
</feature>
<feature type="strand" evidence="20">
    <location>
        <begin position="399"/>
        <end position="403"/>
    </location>
</feature>
<feature type="strand" evidence="20">
    <location>
        <begin position="411"/>
        <end position="416"/>
    </location>
</feature>
<feature type="strand" evidence="24">
    <location>
        <begin position="418"/>
        <end position="421"/>
    </location>
</feature>
<feature type="helix" evidence="20">
    <location>
        <begin position="424"/>
        <end position="426"/>
    </location>
</feature>
<feature type="helix" evidence="20">
    <location>
        <begin position="428"/>
        <end position="433"/>
    </location>
</feature>
<feature type="strand" evidence="20">
    <location>
        <begin position="436"/>
        <end position="441"/>
    </location>
</feature>
<feature type="strand" evidence="20">
    <location>
        <begin position="443"/>
        <end position="449"/>
    </location>
</feature>
<feature type="strand" evidence="20">
    <location>
        <begin position="456"/>
        <end position="464"/>
    </location>
</feature>
<feature type="strand" evidence="20">
    <location>
        <begin position="466"/>
        <end position="468"/>
    </location>
</feature>
<feature type="helix" evidence="20">
    <location>
        <begin position="474"/>
        <end position="478"/>
    </location>
</feature>
<feature type="strand" evidence="20">
    <location>
        <begin position="480"/>
        <end position="489"/>
    </location>
</feature>
<feature type="strand" evidence="20">
    <location>
        <begin position="492"/>
        <end position="497"/>
    </location>
</feature>
<feature type="strand" evidence="20">
    <location>
        <begin position="502"/>
        <end position="504"/>
    </location>
</feature>
<feature type="strand" evidence="20">
    <location>
        <begin position="506"/>
        <end position="509"/>
    </location>
</feature>
<feature type="strand" evidence="20">
    <location>
        <begin position="517"/>
        <end position="524"/>
    </location>
</feature>
<feature type="strand" evidence="23">
    <location>
        <begin position="530"/>
        <end position="532"/>
    </location>
</feature>
<feature type="strand" evidence="20">
    <location>
        <begin position="534"/>
        <end position="544"/>
    </location>
</feature>
<feature type="strand" evidence="20">
    <location>
        <begin position="549"/>
        <end position="553"/>
    </location>
</feature>
<feature type="turn" evidence="24">
    <location>
        <begin position="572"/>
        <end position="579"/>
    </location>
</feature>
<feature type="strand" evidence="24">
    <location>
        <begin position="581"/>
        <end position="583"/>
    </location>
</feature>
<feature type="strand" evidence="24">
    <location>
        <begin position="599"/>
        <end position="602"/>
    </location>
</feature>
<feature type="helix" evidence="20">
    <location>
        <begin position="604"/>
        <end position="606"/>
    </location>
</feature>
<feature type="helix" evidence="20">
    <location>
        <begin position="614"/>
        <end position="617"/>
    </location>
</feature>
<feature type="helix" evidence="20">
    <location>
        <begin position="630"/>
        <end position="632"/>
    </location>
</feature>
<feature type="helix" evidence="20">
    <location>
        <begin position="634"/>
        <end position="638"/>
    </location>
</feature>
<feature type="strand" evidence="20">
    <location>
        <begin position="642"/>
        <end position="650"/>
    </location>
</feature>
<feature type="turn" evidence="20">
    <location>
        <begin position="654"/>
        <end position="658"/>
    </location>
</feature>
<feature type="strand" evidence="20">
    <location>
        <begin position="661"/>
        <end position="665"/>
    </location>
</feature>
<feature type="helix" evidence="20">
    <location>
        <begin position="672"/>
        <end position="678"/>
    </location>
</feature>
<feature type="strand" evidence="20">
    <location>
        <begin position="681"/>
        <end position="698"/>
    </location>
</feature>
<feature type="strand" evidence="20">
    <location>
        <begin position="707"/>
        <end position="713"/>
    </location>
</feature>
<feature type="helix" evidence="20">
    <location>
        <begin position="726"/>
        <end position="729"/>
    </location>
</feature>
<feature type="strand" evidence="20">
    <location>
        <begin position="731"/>
        <end position="733"/>
    </location>
</feature>
<feature type="strand" evidence="20">
    <location>
        <begin position="735"/>
        <end position="739"/>
    </location>
</feature>
<feature type="strand" evidence="20">
    <location>
        <begin position="746"/>
        <end position="749"/>
    </location>
</feature>
<feature type="strand" evidence="20">
    <location>
        <begin position="754"/>
        <end position="760"/>
    </location>
</feature>
<feature type="turn" evidence="20">
    <location>
        <begin position="774"/>
        <end position="777"/>
    </location>
</feature>
<feature type="strand" evidence="20">
    <location>
        <begin position="782"/>
        <end position="787"/>
    </location>
</feature>
<feature type="strand" evidence="20">
    <location>
        <begin position="796"/>
        <end position="814"/>
    </location>
</feature>
<feature type="strand" evidence="21">
    <location>
        <begin position="855"/>
        <end position="866"/>
    </location>
</feature>
<feature type="helix" evidence="21">
    <location>
        <begin position="867"/>
        <end position="869"/>
    </location>
</feature>
<feature type="helix" evidence="21">
    <location>
        <begin position="874"/>
        <end position="876"/>
    </location>
</feature>
<feature type="strand" evidence="21">
    <location>
        <begin position="878"/>
        <end position="881"/>
    </location>
</feature>
<feature type="helix" evidence="21">
    <location>
        <begin position="882"/>
        <end position="884"/>
    </location>
</feature>
<feature type="strand" evidence="21">
    <location>
        <begin position="886"/>
        <end position="896"/>
    </location>
</feature>
<feature type="strand" evidence="21">
    <location>
        <begin position="906"/>
        <end position="911"/>
    </location>
</feature>
<feature type="turn" evidence="21">
    <location>
        <begin position="912"/>
        <end position="915"/>
    </location>
</feature>
<feature type="strand" evidence="21">
    <location>
        <begin position="916"/>
        <end position="921"/>
    </location>
</feature>
<feature type="strand" evidence="21">
    <location>
        <begin position="923"/>
        <end position="930"/>
    </location>
</feature>
<feature type="strand" evidence="27">
    <location>
        <begin position="934"/>
        <end position="936"/>
    </location>
</feature>
<feature type="strand" evidence="21">
    <location>
        <begin position="938"/>
        <end position="948"/>
    </location>
</feature>
<feature type="strand" evidence="21">
    <location>
        <begin position="959"/>
        <end position="962"/>
    </location>
</feature>
<feature type="strand" evidence="21">
    <location>
        <begin position="965"/>
        <end position="973"/>
    </location>
</feature>
<feature type="strand" evidence="21">
    <location>
        <begin position="975"/>
        <end position="982"/>
    </location>
</feature>
<feature type="helix" evidence="21">
    <location>
        <begin position="983"/>
        <end position="986"/>
    </location>
</feature>
<feature type="helix" evidence="25">
    <location>
        <begin position="1509"/>
        <end position="1521"/>
    </location>
</feature>
<feature type="strand" evidence="25">
    <location>
        <begin position="1522"/>
        <end position="1527"/>
    </location>
</feature>
<feature type="strand" evidence="25">
    <location>
        <begin position="1530"/>
        <end position="1539"/>
    </location>
</feature>
<feature type="strand" evidence="25">
    <location>
        <begin position="1541"/>
        <end position="1545"/>
    </location>
</feature>
<feature type="helix" evidence="25">
    <location>
        <begin position="1546"/>
        <end position="1548"/>
    </location>
</feature>
<feature type="strand" evidence="25">
    <location>
        <begin position="1552"/>
        <end position="1556"/>
    </location>
</feature>
<feature type="strand" evidence="25">
    <location>
        <begin position="1559"/>
        <end position="1570"/>
    </location>
</feature>
<feature type="strand" evidence="25">
    <location>
        <begin position="1576"/>
        <end position="1584"/>
    </location>
</feature>
<feature type="helix" evidence="25">
    <location>
        <begin position="1594"/>
        <end position="1596"/>
    </location>
</feature>
<feature type="strand" evidence="25">
    <location>
        <begin position="1604"/>
        <end position="1611"/>
    </location>
</feature>
<feature type="strand" evidence="25">
    <location>
        <begin position="1615"/>
        <end position="1617"/>
    </location>
</feature>
<feature type="strand" evidence="25">
    <location>
        <begin position="1619"/>
        <end position="1634"/>
    </location>
</feature>
<feature type="strand" evidence="25">
    <location>
        <begin position="1637"/>
        <end position="1647"/>
    </location>
</feature>
<feature type="helix" evidence="26">
    <location>
        <begin position="1651"/>
        <end position="1653"/>
    </location>
</feature>
<feature type="strand" evidence="25">
    <location>
        <begin position="1657"/>
        <end position="1660"/>
    </location>
</feature>
<feature type="strand" evidence="25">
    <location>
        <begin position="1663"/>
        <end position="1671"/>
    </location>
</feature>
<feature type="strand" evidence="25">
    <location>
        <begin position="1676"/>
        <end position="1680"/>
    </location>
</feature>
<feature type="helix" evidence="25">
    <location>
        <begin position="1683"/>
        <end position="1685"/>
    </location>
</feature>
<comment type="function">
    <molecule>Capsid protein VP1</molecule>
    <text evidence="2">Forms an icosahedral capsid of pseudo T=3 symmetry with capsid proteins VP2 and VP3 (By similarity). The capsid is 300 Angstroms in diameter, composed of 60 copies of each capsid protein and enclosing the viral positive strand RNA genome (By similarity). Capsid protein VP1 mainly forms the vertices of the capsid (By similarity). Capsid protein VP1 interacts with host cell receptor to provide virion attachment to target host cells (By similarity). This attachment induces virion internalization (By similarity). Tyrosine kinases are probably involved in the entry process (By similarity). After binding to its receptor, the capsid undergoes conformational changes (By similarity). Capsid protein VP1 N-terminus (that contains an amphipathic alpha-helix) and capsid protein VP4 are externalized (By similarity). Together, they shape a pore in the host membrane through which viral genome is translocated to host cell cytoplasm (By similarity).</text>
</comment>
<comment type="function">
    <molecule>Capsid protein VP2</molecule>
    <text evidence="2">Forms an icosahedral capsid of pseudo T=3 symmetry with capsid proteins VP2 and VP3 (By similarity). The capsid is 300 Angstroms in diameter, composed of 60 copies of each capsid protein and enclosing the viral positive strand RNA genome (By similarity).</text>
</comment>
<comment type="function">
    <molecule>Capsid protein VP3</molecule>
    <text evidence="2">Forms an icosahedral capsid of pseudo T=3 symmetry with capsid proteins VP2 and VP3 (By similarity). The capsid is 300 Angstroms in diameter, composed of 60 copies of each capsid protein and enclosing the viral positive strand RNA genome (By similarity).</text>
</comment>
<comment type="function">
    <molecule>Capsid protein VP4</molecule>
    <text evidence="2">Lies on the inner surface of the capsid shell (By similarity). After binding to the host receptor, the capsid undergoes conformational changes (By similarity). Capsid protein VP4 is released, Capsid protein VP1 N-terminus is externalized, and together, they shape a pore in the host membrane through which the viral genome is translocated into the host cell cytoplasm (By similarity).</text>
</comment>
<comment type="function">
    <molecule>Capsid protein VP0</molecule>
    <text evidence="2">Component of immature procapsids, which is cleaved into capsid proteins VP4 and VP2 after maturation (By similarity). Allows the capsid to remain inactive before the maturation step (By similarity).</text>
</comment>
<comment type="function">
    <molecule>Protease 2A</molecule>
    <text evidence="2 3 12 14">Cysteine protease that cleaves viral polyprotein and specific host proteins (By similarity). It is responsible for the autocatalytic cleavage between the P1 and P2 regions, which is the first cleavage occurring in the polyprotein (By similarity). Also cleaves the host translation initiation factor EIF4G1, in order to shut down the capped cellular mRNA translation (PubMed:11034318). Inhibits the host nucleus-cytoplasm protein and RNA trafficking by cleaving host members of the nuclear pores (PubMed:20622012). Counteracts stress granule formation probably by antagonizing its assembly or promoting its dissassembly (By similarity).</text>
</comment>
<comment type="function">
    <molecule>Protein 2B</molecule>
    <text evidence="2">Plays an essential role in the virus replication cycle by acting as a viroporin. Creates a pore in the host endoplasmic reticulum and as a consequence releases Ca2+ in the cytoplasm of infected cell. In turn, high levels of cytoplasmic calcium may trigger membrane trafficking and transport of viral ER-associated proteins to viroplasms, sites of viral genome replication.</text>
</comment>
<comment type="function">
    <molecule>Protein 2C</molecule>
    <text evidence="2">Induces and associates with structural rearrangements of intracellular membranes. Displays RNA-binding, nucleotide binding and NTPase activities. May play a role in virion morphogenesis and viral RNA encapsidation by interacting with the capsid protein VP3.</text>
</comment>
<comment type="function">
    <molecule>Protein 3AB</molecule>
    <text evidence="2">Localizes the viral replication complex to the surface of membranous vesicles. Together with protein 3CD binds the Cis-Active RNA Element (CRE) which is involved in RNA synthesis initiation. Acts as a cofactor to stimulate the activity of 3D polymerase, maybe through a nucleid acid chaperone activity.</text>
</comment>
<comment type="function">
    <molecule>Protein 3A</molecule>
    <text evidence="13 17">Localizes the viral replication complex to the surface of membranous vesicles. It inhibits host cell endoplasmic reticulum-to-Golgi apparatus transport and causes the disassembly of the Golgi complex, possibly through GBF1 interaction (PubMed:17005635). This would result in depletion of MHC, trail receptors and IFN receptors at the host cell surface (PubMed:17005635). Plays an essential role in viral RNA replication by recruiting ACBD3 and PI4KB at the viral replication sites, thereby allowing the formation of the rearranged membranous structures where viral replication takes place (Probable).</text>
</comment>
<comment type="function">
    <molecule>Viral protein genome-linked</molecule>
    <text evidence="2">Acts as a primer for viral RNA replication and remains covalently bound to viral genomic RNA. VPg is uridylylated prior to priming replication into VPg-pUpU. The oriI viral genomic sequence may act as a template for this. The VPg-pUpU is then used as primer on the genomic RNA poly(A) by the RNA-dependent RNA polymerase to replicate the viral genome. During genome replication, the VPg-RNA linkage is removed by the host TDP2, thereby accelerating replication. During the late stage of the replication cycle, host TDP2 is excluded from sites of viral RNA synthesis and encapsidation, allowing for the generation of progeny virions.</text>
</comment>
<comment type="function">
    <molecule>Protein 3CD</molecule>
    <text evidence="2">Involved in the viral replication complex and viral polypeptide maturation. It exhibits protease activity with a specificity and catalytic efficiency that is different from protease 3C. Protein 3CD lacks polymerase activity. Protein 3CD binds to the 5'UTR of the viral genome.</text>
</comment>
<comment type="function">
    <molecule>RNA-directed RNA polymerase</molecule>
    <text evidence="2">Replicates the viral genomic RNA on the surface of intracellular membranes. May form linear arrays of subunits that propagate along a strong head-to-tail interaction called interface-I. Covalently attaches UMP to a tyrosine of VPg, which is used to prime RNA synthesis. The positive stranded RNA genome is first replicated at virus induced membranous vesicles, creating a dsRNA genomic replication form. This dsRNA is then used as template to synthesize positive stranded RNA genomes. ss(+)RNA genomes are either translated, replicated or encapsidated.</text>
</comment>
<comment type="function">
    <molecule>Protease 3C</molecule>
    <text evidence="2 4">Major viral protease that mediates proteolytic processing of the polyprotein (By similarity). Cleaves host EIF5B, contributing to host translation shutoff (By similarity). Also cleaves host PABPC1, contributing to host translation shutoff (By similarity). Cleaves host NLRP1, triggers host N-glycine-mediated degradation of the autoinhibitory NLRP1 N-terminal fragment (By similarity).</text>
</comment>
<comment type="catalytic activity">
    <molecule>Protein 2C</molecule>
    <reaction evidence="2">
        <text>a ribonucleoside 5'-triphosphate + H2O = a ribonucleoside 5'-diphosphate + phosphate + H(+)</text>
        <dbReference type="Rhea" id="RHEA:23680"/>
        <dbReference type="ChEBI" id="CHEBI:15377"/>
        <dbReference type="ChEBI" id="CHEBI:15378"/>
        <dbReference type="ChEBI" id="CHEBI:43474"/>
        <dbReference type="ChEBI" id="CHEBI:57930"/>
        <dbReference type="ChEBI" id="CHEBI:61557"/>
        <dbReference type="EC" id="3.6.1.15"/>
    </reaction>
</comment>
<comment type="catalytic activity">
    <molecule>Protease 2A</molecule>
    <reaction evidence="2">
        <text>Selective cleavage of Tyr-|-Gly bond in the picornavirus polyprotein.</text>
        <dbReference type="EC" id="3.4.22.29"/>
    </reaction>
</comment>
<comment type="catalytic activity">
    <molecule>RNA-directed RNA polymerase</molecule>
    <reaction evidence="8">
        <text>RNA(n) + a ribonucleoside 5'-triphosphate = RNA(n+1) + diphosphate</text>
        <dbReference type="Rhea" id="RHEA:21248"/>
        <dbReference type="Rhea" id="RHEA-COMP:14527"/>
        <dbReference type="Rhea" id="RHEA-COMP:17342"/>
        <dbReference type="ChEBI" id="CHEBI:33019"/>
        <dbReference type="ChEBI" id="CHEBI:61557"/>
        <dbReference type="ChEBI" id="CHEBI:140395"/>
        <dbReference type="EC" id="2.7.7.48"/>
    </reaction>
</comment>
<comment type="catalytic activity">
    <molecule>Protease 3C</molecule>
    <reaction evidence="10">
        <text>Selective cleavage of Gln-|-Gly bond in the poliovirus polyprotein. In other picornavirus reactions Glu may be substituted for Gln, and Ser or Thr for Gly.</text>
        <dbReference type="EC" id="3.4.22.28"/>
    </reaction>
</comment>
<comment type="cofactor">
    <molecule>RNA-directed RNA polymerase</molecule>
    <cofactor evidence="2">
        <name>Mg(2+)</name>
        <dbReference type="ChEBI" id="CHEBI:18420"/>
    </cofactor>
    <text evidence="2 5">Binds 2 magnesium ions that constitute a dinuclear catalytic metal center (By similarity). The magnesium ions are not prebound but only present for catalysis (By similarity). Requires the presence of 3CDpro or 3CPro (By similarity).</text>
</comment>
<comment type="activity regulation">
    <molecule>RNA-directed RNA polymerase</molecule>
    <text evidence="2">Replication or transcription is subject to high level of random mutations by the nucleotide analog ribavirin.</text>
</comment>
<comment type="subunit">
    <molecule>Capsid protein VP0</molecule>
    <text evidence="2">Interacts with capsid protein VP1 and capsid protein VP3 to form heterotrimeric protomers.</text>
</comment>
<comment type="subunit">
    <molecule>Capsid protein VP1</molecule>
    <text evidence="2">Interacts with capsid protein VP0, and capsid protein VP3 to form heterotrimeric protomers (By similarity). Five protomers subsequently associate to form pentamers which serve as building blocks for the capsid (By similarity). Interacts with capsid protein VP2, capsid protein VP3 and capsid protein VP4 following cleavage of capsid protein VP0 (By similarity).</text>
</comment>
<comment type="subunit">
    <molecule>Capsid protein VP2</molecule>
    <text evidence="2">Interacts with capsid protein VP1 and capsid protein VP3 in the mature capsid.</text>
</comment>
<comment type="subunit">
    <molecule>Capsid protein VP3</molecule>
    <text evidence="2">Interacts with capsid protein VP0 and capsid protein VP1 to form heterotrimeric protomers (By similarity). Five protomers subsequently associate to form pentamers which serve as building blocks for the capsid (By similarity). Interacts with capsid protein VP4 in the mature capsid (By similarity). Interacts with protein 2C; this interaction may be important for virion morphogenesis (By similarity).</text>
</comment>
<comment type="subunit">
    <molecule>Capsid protein VP4</molecule>
    <text evidence="2">Interacts with capsid protein VP1 and capsid protein VP3.</text>
</comment>
<comment type="subunit">
    <molecule>Protease 2A</molecule>
    <text evidence="15">Homodimer.</text>
</comment>
<comment type="subunit">
    <molecule>Protein 2C</molecule>
    <text evidence="2">Homohexamer; forms a hexameric ring structure with 6-fold symmetry characteristic of AAA+ ATPases (By similarity). Interacts (via N-terminus) with host RTN3 (via reticulon domain); this interaction is important for viral replication (By similarity). Interacts with capsid protein VP3; this interaction may be important for virion morphogenesis (By similarity).</text>
</comment>
<comment type="subunit">
    <molecule>Protein 3AB</molecule>
    <text evidence="2">Interacts with protein 3CD.</text>
</comment>
<comment type="subunit">
    <molecule>Protein 3A</molecule>
    <text evidence="2 13">Homodimer (By similarity). Interacts with host GBF1 (PubMed:17005635). Interacts (via GOLD domain) with host ACBD3 (via GOLD domain); this interaction allows the formation of a viral protein 3A/ACBD3 heterotetramer with a 2:2 stoichiometry, which will stimulate the recruitment of host PI4KB in order to synthesize PI4P at the viral RNA replication sites (By similarity).</text>
</comment>
<comment type="subunit">
    <molecule>Viral protein genome-linked</molecule>
    <text evidence="2">Interacts with RNA-directed RNA polymerase.</text>
</comment>
<comment type="subunit">
    <molecule>Protein 3CD</molecule>
    <text evidence="2">Interacts with protein 3AB and with RNA-directed RNA polymerase.</text>
</comment>
<comment type="subunit">
    <molecule>RNA-directed RNA polymerase</molecule>
    <text evidence="2">Interacts with Viral protein genome-linked and with protein 3CD.</text>
</comment>
<comment type="subcellular location">
    <molecule>Capsid protein VP0</molecule>
    <subcellularLocation>
        <location>Virion</location>
    </subcellularLocation>
    <subcellularLocation>
        <location evidence="16">Host cytoplasm</location>
    </subcellularLocation>
</comment>
<comment type="subcellular location">
    <molecule>Capsid protein VP4</molecule>
    <subcellularLocation>
        <location>Virion</location>
    </subcellularLocation>
</comment>
<comment type="subcellular location">
    <molecule>Capsid protein VP2</molecule>
    <subcellularLocation>
        <location evidence="2">Virion</location>
    </subcellularLocation>
    <subcellularLocation>
        <location evidence="16">Host cytoplasm</location>
    </subcellularLocation>
</comment>
<comment type="subcellular location">
    <molecule>Capsid protein VP3</molecule>
    <subcellularLocation>
        <location evidence="2">Virion</location>
    </subcellularLocation>
    <subcellularLocation>
        <location evidence="16">Host cytoplasm</location>
    </subcellularLocation>
</comment>
<comment type="subcellular location">
    <molecule>Capsid protein VP1</molecule>
    <subcellularLocation>
        <location evidence="2">Virion</location>
    </subcellularLocation>
    <subcellularLocation>
        <location evidence="16">Host cytoplasm</location>
    </subcellularLocation>
</comment>
<comment type="subcellular location">
    <molecule>Protein 2B</molecule>
    <subcellularLocation>
        <location evidence="16">Host cytoplasmic vesicle membrane</location>
        <topology evidence="16">Peripheral membrane protein</topology>
        <orientation evidence="16">Cytoplasmic side</orientation>
    </subcellularLocation>
    <text>Probably localizes to the surface of intracellular membrane vesicles that are induced after virus infection as the site for viral RNA replication. These vesicles are derived from the endoplasmic reticulum.</text>
</comment>
<comment type="subcellular location">
    <molecule>Protein 2C</molecule>
    <subcellularLocation>
        <location evidence="16">Host cytoplasmic vesicle membrane</location>
        <topology evidence="16">Peripheral membrane protein</topology>
        <orientation evidence="16">Cytoplasmic side</orientation>
    </subcellularLocation>
    <text>Probably localizes to the surface of intracellular membrane vesicles that are induced after virus infection as the site for viral RNA replication. These vesicles are derived from the endoplasmic reticulum.</text>
</comment>
<comment type="subcellular location">
    <molecule>Protein 3A</molecule>
    <subcellularLocation>
        <location evidence="16">Host cytoplasmic vesicle membrane</location>
        <topology evidence="16">Peripheral membrane protein</topology>
        <orientation evidence="16">Cytoplasmic side</orientation>
    </subcellularLocation>
    <text>Probably localizes to the surface of intracellular membrane vesicles that are induced after virus infection as the site for viral RNA replication. These vesicles are derived from the endoplasmic reticulum.</text>
</comment>
<comment type="subcellular location">
    <molecule>Protein 3AB</molecule>
    <subcellularLocation>
        <location evidence="16">Host cytoplasmic vesicle membrane</location>
        <topology evidence="16">Peripheral membrane protein</topology>
        <orientation evidence="16">Cytoplasmic side</orientation>
    </subcellularLocation>
    <text>Probably localizes to the surface of intracellular membrane vesicles that are induced after virus infection as the site for viral RNA replication. These vesicles are derived from the endoplasmic reticulum.</text>
</comment>
<comment type="subcellular location">
    <molecule>Viral protein genome-linked</molecule>
    <subcellularLocation>
        <location evidence="2">Virion</location>
    </subcellularLocation>
    <subcellularLocation>
        <location evidence="6">Host cytoplasm</location>
    </subcellularLocation>
</comment>
<comment type="subcellular location">
    <molecule>Protease 3C</molecule>
    <subcellularLocation>
        <location>Host cytoplasm</location>
    </subcellularLocation>
</comment>
<comment type="subcellular location">
    <molecule>Protein 3CD</molecule>
    <subcellularLocation>
        <location evidence="2">Host nucleus</location>
    </subcellularLocation>
    <subcellularLocation>
        <location evidence="2">Host cytoplasm</location>
    </subcellularLocation>
    <subcellularLocation>
        <location evidence="16">Host cytoplasmic vesicle membrane</location>
        <topology evidence="16">Peripheral membrane protein</topology>
        <orientation evidence="16">Cytoplasmic side</orientation>
    </subcellularLocation>
    <text>Probably localizes to the surface of intracellular membrane vesicles that are induced after virus infection as the site for viral RNA replication. These vesicles are derived from the endoplasmic reticulum.</text>
</comment>
<comment type="subcellular location">
    <molecule>RNA-directed RNA polymerase</molecule>
    <subcellularLocation>
        <location evidence="16">Host cytoplasmic vesicle membrane</location>
        <topology evidence="16">Peripheral membrane protein</topology>
        <orientation evidence="16">Cytoplasmic side</orientation>
    </subcellularLocation>
    <text>Probably localizes to the surface of intracellular membrane vesicles that are induced after virus infection as the site for viral RNA replication. These vesicles are derived from the endoplasmic reticulum.</text>
</comment>
<comment type="domain">
    <molecule>Protein 2C</molecule>
    <text evidence="1 2">The N-terminus has membrane-binding (By similarity). The N-terminus also displays RNA-binding properties (By similarity). The N-terminus is involved in oligomerization (By similarity). The central part contains an ATPase domain and a degenerate C4-type zinc-finger with only 3 cysteines (By similarity). The C-terminus is involved in RNA-binding (By similarity). The extreme C-terminus contains a region involved in oligomerization (By similarity).</text>
</comment>
<comment type="PTM">
    <molecule>Genome polyprotein</molecule>
    <text evidence="2">Specific enzymatic cleavages in vivo by the viral proteases yield processing intermediates and the mature proteins.</text>
</comment>
<comment type="PTM">
    <molecule>Capsid protein VP0</molecule>
    <text evidence="2">Myristoylation is required for the formation of pentamers during virus assembly. Further assembly of 12 pentamers and a molecule of genomic RNA generates the provirion.</text>
</comment>
<comment type="PTM">
    <molecule>Capsid protein VP0</molecule>
    <text evidence="2">During virion maturation, immature virions are rendered infectious following cleavage of VP0 into VP4 and VP2. This maturation seems to be an autocatalytic event triggered by the presence of RNA in the capsid and it is followed by a conformational change infectious virion.</text>
</comment>
<comment type="PTM">
    <molecule>Capsid protein VP4</molecule>
    <text evidence="2">Myristoylation is required during RNA encapsidation and formation of the mature virus particle.</text>
</comment>
<comment type="PTM">
    <molecule>Viral protein genome-linked</molecule>
    <text evidence="2">VPg is uridylylated by the polymerase into VPg-pUpU. This acts as a nucleotide-peptide primer for the genomic RNA replication.</text>
</comment>
<comment type="similarity">
    <text evidence="16">Belongs to the picornaviruses polyprotein family.</text>
</comment>
<comment type="online information" name="Virus Particle ExploreR db">
    <link uri="https://viperdb.org/Info_Page.php?VDB=1fpn"/>
    <text>Icosahedral capsid structure associated with cellular receptor</text>
</comment>
<comment type="online information" name="Virus Particle ExploreR db">
    <link uri="https://viperdb.org/Info_Page.php?VDB=1v9u"/>
    <text>Icosahedral capsid structure complexed with cellular receptor fragment</text>
</comment>
<sequence>MGAQVSRQNVGTHSTQNSVSNGSSLNYFNINYFKDAASNGASKLEFTQDPSKFTDPVKDVLEKGIPTLQSPTVEACGYSDRIIQITRGDSTITSQDVANAIVAYGVWPHYLSSKDASAIDKPSQPDTSSNRFYTLRSVTWSSSSKGWWWKLPDALKDMGIFGENMFYHYLGRSGYTIHVQCNASKFHQGTLIVALIPEHQIASALHGNVNVGYNYTHPGETGREVKAETRLNPDLQPTEEYWLNFDGTLLGNITIFPHQFINLRSNNSATIIAPYVNAVPMDSMRSHNNWSLVIIPICPLETSSAINTIPITISISPMCAEFSGARAKRQGLPVFITPGSGQFLTTDDFQSPCALPWYHPTKEISIPGEVKNLVEICQVDSLVPINNTDTYINSENMYSVVLQSSINAPDKIFSIRTDVASQPLATTLIGEISSYFTHWTGSLRFSFMFCGTANTTVKLLLAYTPPGIAEPTTRKDAMLGTHVIWDVGLQSTISMVVPWISASHYRNTSPGRSTSGYITCWYQTRLVIPPQTPPTARLLCFVSGCKDFCLRMARDTNLHLQSGAIAQNPVENYIDEVLNEVLVVPNINSSNPTTSNSAPALDAAETGHTSSVQPEDVIETRYVQTSQTRDEMSLESFLGRSGCIHESKLEVTLANYNKENFTVWAINLQEMAQIRRKFELFTYTRFDSEITLVPCISALSQDIGHITMQYMYVPPGAPVPNSRDDYAWQSGTNASVFWQHGQAYPRFSLPFLSVASAYYMFYDGYDEQDQNYGTANTNNMGSLCSRIVTEKHIHKVHIMTRIYHKAKHVKAWCPRPPRALEYTRAHRTNFKIEDRSIQTAIVTRPIITTAGPSDMYVHVGNLIYRNLHLFNSEMHESILVSYSSDLIIYRTNTVGDDYIPSCDCTQATYYCKHKNRYFPITVTSHDWYEIQESEYYPKHIQYNLLIGEGPCEPGDCGGKLLCKHGVIGIVTAGGDNHVAFIDLRHFHCAEEQGVTDYIHMLGEAFGNGFVDSVKEHIHAINPVGNISKKIIKWMLRIISAMVIIIRNSSDPQTILATLTLIGCSGSPWRFLKEKFCKWTQLNYIHKESDSWLKKFTEACNAARGLEWIGNKISKFIEWMKSMLPQAQLKVKYLNELKKLNLYEKQVESLRVADMKTQEKIKMEIDTLHDLSRKFLPLYASEAKRIKTLYIKCDNIIKQKKRCEPVAIVIHGPPGAGKSITTNFLAKMITNDSDIYSLPPDPKYFDGYDQQSVVIMDDIMQNPAGDDMTLFCQMVSSVTFIPPMADLPDKGKAFDSRFVLCSTNHSLLTPPTITSLPAMNRRFFLDLDIIVHDNFKDPQGKLNVAAAFRPCDVDNRIGNARCCPFVCGKAVSFKDRNSCNKYSLAQVYNIMIEEDRRRRQVVDVMTAIFQGPIDMKNPPPPAITDLLQSVRTPEVIKYCEGNRWIIPAECKIEKELNLANTIITIIANVIGMARIIYVIYKLFCTLQGPYSGEPKPKTKIPERRVVTQGPEEEFGMSLIKHNSCVITTENGKFTGLGVYDRFVVVPTHADPGKEIQVDGITTKVIDSYDLYNKNGIKLEITVLKLDRNEKFRDIRRYIPNNEDDYPNCNLALLANQPEPTIINVGDVVSYGNILLSGNQTARMLKYSYPTKSGYCGGVLYKIGQVLGIHVGGNGRDGFSAMLLRSYFTDVQGQITLSKKTSECNLPSIHTPCKTKLQPSVFYDVFPGSKEPAVLSEKDARLQVDFNEALFSKYKGNTDCSINDHIRIASSHYAAQLITLDIDPKPITLEDSVFGTDGLEALDLNTSAGFPYIAMGVKKRDLINNKTKDISKLKEAIDKYGVDLPMVTFLKDELRKHEKVIKGKTRVIEASSVNDTLLFRTTFGNLFSKFHLNPGIVTGSAVGCDPEVFWSKIPAMLDDKCIMAFDYTNYDGSIHPIWFEALKQVLVDLSFNPTLIDRLCKSKHIFKNTYYEVEGGVPSGCSGTSIFNTMINNIIIRTLVLDAYKNIDLDKLKIIAYGDDVIFSYIHELDMEAIAIEGVKYGLTITPADKSNTFVKLDYSNVTFLKRGFKQDEKYNFLIHPTFPEDEIFESIRWTKKPSQMHEHVLSLCHLMWHNGRDAYKKFVEKIRSVSAGRALYIPPYDLLLHEWYEKF</sequence>
<accession>P04936</accession>
<evidence type="ECO:0000250" key="1">
    <source>
        <dbReference type="UniProtKB" id="B9VUU3"/>
    </source>
</evidence>
<evidence type="ECO:0000250" key="2">
    <source>
        <dbReference type="UniProtKB" id="P03300"/>
    </source>
</evidence>
<evidence type="ECO:0000250" key="3">
    <source>
        <dbReference type="UniProtKB" id="P03301"/>
    </source>
</evidence>
<evidence type="ECO:0000250" key="4">
    <source>
        <dbReference type="UniProtKB" id="P03303"/>
    </source>
</evidence>
<evidence type="ECO:0000250" key="5">
    <source>
        <dbReference type="UniProtKB" id="P03313"/>
    </source>
</evidence>
<evidence type="ECO:0000250" key="6">
    <source>
        <dbReference type="UniProtKB" id="Q66478"/>
    </source>
</evidence>
<evidence type="ECO:0000255" key="7"/>
<evidence type="ECO:0000255" key="8">
    <source>
        <dbReference type="PROSITE-ProRule" id="PRU00539"/>
    </source>
</evidence>
<evidence type="ECO:0000255" key="9">
    <source>
        <dbReference type="PROSITE-ProRule" id="PRU00551"/>
    </source>
</evidence>
<evidence type="ECO:0000255" key="10">
    <source>
        <dbReference type="PROSITE-ProRule" id="PRU01222"/>
    </source>
</evidence>
<evidence type="ECO:0000256" key="11">
    <source>
        <dbReference type="SAM" id="MobiDB-lite"/>
    </source>
</evidence>
<evidence type="ECO:0000269" key="12">
    <source>
    </source>
</evidence>
<evidence type="ECO:0000269" key="13">
    <source>
    </source>
</evidence>
<evidence type="ECO:0000269" key="14">
    <source>
    </source>
</evidence>
<evidence type="ECO:0000269" key="15">
    <source>
    </source>
</evidence>
<evidence type="ECO:0000305" key="16"/>
<evidence type="ECO:0000305" key="17">
    <source>
    </source>
</evidence>
<evidence type="ECO:0000305" key="18">
    <source>
    </source>
</evidence>
<evidence type="ECO:0007829" key="19">
    <source>
        <dbReference type="PDB" id="1A3R"/>
    </source>
</evidence>
<evidence type="ECO:0007829" key="20">
    <source>
        <dbReference type="PDB" id="1FPN"/>
    </source>
</evidence>
<evidence type="ECO:0007829" key="21">
    <source>
        <dbReference type="PDB" id="2HRV"/>
    </source>
</evidence>
<evidence type="ECO:0007829" key="22">
    <source>
        <dbReference type="PDB" id="3DPR"/>
    </source>
</evidence>
<evidence type="ECO:0007829" key="23">
    <source>
        <dbReference type="PDB" id="3TN9"/>
    </source>
</evidence>
<evidence type="ECO:0007829" key="24">
    <source>
        <dbReference type="PDB" id="3VDD"/>
    </source>
</evidence>
<evidence type="ECO:0007829" key="25">
    <source>
        <dbReference type="PDB" id="5FX6"/>
    </source>
</evidence>
<evidence type="ECO:0007829" key="26">
    <source>
        <dbReference type="PDB" id="6FFN"/>
    </source>
</evidence>
<evidence type="ECO:0007829" key="27">
    <source>
        <dbReference type="PDB" id="7ARA"/>
    </source>
</evidence>
<protein>
    <recommendedName>
        <fullName>Genome polyprotein</fullName>
    </recommendedName>
    <component>
        <recommendedName>
            <fullName>P1</fullName>
        </recommendedName>
    </component>
    <component>
        <recommendedName>
            <fullName>Capsid protein VP0</fullName>
        </recommendedName>
        <alternativeName>
            <fullName>VP4-VP2</fullName>
        </alternativeName>
    </component>
    <component>
        <recommendedName>
            <fullName>Capsid protein VP4</fullName>
        </recommendedName>
        <alternativeName>
            <fullName>P1A</fullName>
        </alternativeName>
        <alternativeName>
            <fullName>Virion protein 4</fullName>
        </alternativeName>
    </component>
    <component>
        <recommendedName>
            <fullName>Capsid protein VP2</fullName>
        </recommendedName>
        <alternativeName>
            <fullName>P1B</fullName>
        </alternativeName>
        <alternativeName>
            <fullName>Virion protein 2</fullName>
        </alternativeName>
    </component>
    <component>
        <recommendedName>
            <fullName>Capsid protein VP3</fullName>
        </recommendedName>
        <alternativeName>
            <fullName>P1C</fullName>
        </alternativeName>
        <alternativeName>
            <fullName>Virion protein 3</fullName>
        </alternativeName>
    </component>
    <component>
        <recommendedName>
            <fullName>Capsid protein VP1</fullName>
        </recommendedName>
        <alternativeName>
            <fullName>P1D</fullName>
        </alternativeName>
        <alternativeName>
            <fullName>Virion protein 1</fullName>
        </alternativeName>
    </component>
    <component>
        <recommendedName>
            <fullName>P2</fullName>
        </recommendedName>
    </component>
    <component>
        <recommendedName>
            <fullName>Protease 2A</fullName>
            <shortName>P2A</shortName>
            <ecNumber evidence="2">3.4.22.29</ecNumber>
        </recommendedName>
        <alternativeName>
            <fullName>Picornain 2A</fullName>
        </alternativeName>
        <alternativeName>
            <fullName>Protein 2A</fullName>
        </alternativeName>
    </component>
    <component>
        <recommendedName>
            <fullName>Protein 2B</fullName>
            <shortName>P2B</shortName>
        </recommendedName>
    </component>
    <component>
        <recommendedName>
            <fullName>Protein 2C</fullName>
            <shortName>P2C</shortName>
            <ecNumber evidence="2">3.6.1.15</ecNumber>
        </recommendedName>
    </component>
    <component>
        <recommendedName>
            <fullName>P3</fullName>
        </recommendedName>
    </component>
    <component>
        <recommendedName>
            <fullName>Protein 3AB</fullName>
        </recommendedName>
    </component>
    <component>
        <recommendedName>
            <fullName>Protein 3A</fullName>
            <shortName>P3A</shortName>
        </recommendedName>
    </component>
    <component>
        <recommendedName>
            <fullName>Viral protein genome-linked</fullName>
            <shortName>VPg</shortName>
        </recommendedName>
        <alternativeName>
            <fullName>Protein 3B</fullName>
            <shortName>P3B</shortName>
        </alternativeName>
    </component>
    <component>
        <recommendedName>
            <fullName>Protein 3CD</fullName>
            <ecNumber>3.4.22.28</ecNumber>
        </recommendedName>
    </component>
    <component>
        <recommendedName>
            <fullName evidence="10">Protease 3C</fullName>
            <ecNumber evidence="10">3.4.22.28</ecNumber>
        </recommendedName>
        <alternativeName>
            <fullName evidence="10">Picornain 3C</fullName>
            <shortName evidence="10">P3C</shortName>
        </alternativeName>
    </component>
    <component>
        <recommendedName>
            <fullName evidence="8">RNA-directed RNA polymerase</fullName>
            <shortName>RdRp</shortName>
            <ecNumber evidence="8">2.7.7.48</ecNumber>
        </recommendedName>
        <alternativeName>
            <fullName>3D polymerase</fullName>
            <shortName>3Dpol</shortName>
        </alternativeName>
        <alternativeName>
            <fullName>Protein 3D</fullName>
            <shortName>3D</shortName>
        </alternativeName>
    </component>
</protein>
<organismHost>
    <name type="scientific">Homo sapiens</name>
    <name type="common">Human</name>
    <dbReference type="NCBI Taxonomy" id="9606"/>
</organismHost>
<keyword id="KW-0002">3D-structure</keyword>
<keyword id="KW-1072">Activation of host autophagy by virus</keyword>
<keyword id="KW-0067">ATP-binding</keyword>
<keyword id="KW-0068">Autocatalytic cleavage</keyword>
<keyword id="KW-0167">Capsid protein</keyword>
<keyword id="KW-0191">Covalent protein-RNA linkage</keyword>
<keyword id="KW-0235">DNA replication</keyword>
<keyword id="KW-1262">Eukaryotic host gene expression shutoff by virus</keyword>
<keyword id="KW-1193">Eukaryotic host translation shutoff by virus</keyword>
<keyword id="KW-0347">Helicase</keyword>
<keyword id="KW-1035">Host cytoplasm</keyword>
<keyword id="KW-1036">Host cytoplasmic vesicle</keyword>
<keyword id="KW-1190">Host gene expression shutoff by virus</keyword>
<keyword id="KW-1043">Host membrane</keyword>
<keyword id="KW-1192">Host mRNA suppression by virus</keyword>
<keyword id="KW-1048">Host nucleus</keyword>
<keyword id="KW-0945">Host-virus interaction</keyword>
<keyword id="KW-0378">Hydrolase</keyword>
<keyword id="KW-1090">Inhibition of host innate immune response by virus</keyword>
<keyword id="KW-1099">Inhibition of host mRNA nuclear export by virus</keyword>
<keyword id="KW-1088">Inhibition of host RIG-I by virus</keyword>
<keyword id="KW-1113">Inhibition of host RLR pathway by virus</keyword>
<keyword id="KW-0407">Ion channel</keyword>
<keyword id="KW-0406">Ion transport</keyword>
<keyword id="KW-0449">Lipoprotein</keyword>
<keyword id="KW-0460">Magnesium</keyword>
<keyword id="KW-0472">Membrane</keyword>
<keyword id="KW-0479">Metal-binding</keyword>
<keyword id="KW-0519">Myristate</keyword>
<keyword id="KW-0547">Nucleotide-binding</keyword>
<keyword id="KW-0548">Nucleotidyltransferase</keyword>
<keyword id="KW-0597">Phosphoprotein</keyword>
<keyword id="KW-1172">Pore-mediated penetration of viral genome into host cell</keyword>
<keyword id="KW-0645">Protease</keyword>
<keyword id="KW-0677">Repeat</keyword>
<keyword id="KW-0694">RNA-binding</keyword>
<keyword id="KW-0696">RNA-directed RNA polymerase</keyword>
<keyword id="KW-1143">T=pseudo3 icosahedral capsid protein</keyword>
<keyword id="KW-0788">Thiol protease</keyword>
<keyword id="KW-0808">Transferase</keyword>
<keyword id="KW-0813">Transport</keyword>
<keyword id="KW-1161">Viral attachment to host cell</keyword>
<keyword id="KW-0899">Viral immunoevasion</keyword>
<keyword id="KW-1182">Viral ion channel</keyword>
<keyword id="KW-1162">Viral penetration into host cytoplasm</keyword>
<keyword id="KW-0693">Viral RNA replication</keyword>
<keyword id="KW-0946">Virion</keyword>
<keyword id="KW-1164">Virus endocytosis by host</keyword>
<keyword id="KW-1160">Virus entry into host cell</keyword>
<keyword id="KW-0862">Zinc</keyword>
<keyword id="KW-0863">Zinc-finger</keyword>
<reference key="1">
    <citation type="journal article" date="1985" name="Nucleic Acids Res.">
        <title>Human rhinovirus 2: complete nucleotide sequence and proteolytic processing signals in the capsid protein region.</title>
        <authorList>
            <person name="Skern T."/>
            <person name="Sommergruber W."/>
            <person name="Blaas D."/>
            <person name="Gruendler P."/>
            <person name="Fraundorfer F."/>
            <person name="Pieler C."/>
            <person name="Fogy I."/>
            <person name="Kuechler E."/>
        </authorList>
    </citation>
    <scope>NUCLEOTIDE SEQUENCE [GENOMIC RNA]</scope>
</reference>
<reference key="2">
    <citation type="submission" date="1986-02" db="EMBL/GenBank/DDBJ databases">
        <authorList>
            <person name="Kuechler E."/>
        </authorList>
    </citation>
    <scope>SEQUENCE REVISION</scope>
</reference>
<reference key="3">
    <citation type="journal article" date="1995" name="Protein Sci.">
        <title>Spectroscopic characterization of rhinoviral protease 2A: Zn is essential for the structural integrity.</title>
        <authorList>
            <person name="Voss T."/>
            <person name="Meyer R."/>
            <person name="Sommergruber W."/>
        </authorList>
    </citation>
    <scope>SUBUNIT (PROTEASE 2A)</scope>
    <scope>ZINC-BINDING (PROTEASE 2A)</scope>
</reference>
<reference key="4">
    <citation type="journal article" date="2000" name="FEBS Lett.">
        <title>Extremely efficient cleavage of eIF4G by picornaviral proteinases L and 2A in vitro.</title>
        <authorList>
            <person name="Glaser W."/>
            <person name="Skern T."/>
        </authorList>
    </citation>
    <scope>FUNCTION (LEADER PROTEASE)</scope>
</reference>
<reference key="5">
    <citation type="journal article" date="2002" name="Mol. Cell">
        <title>The concerted conformational changes during human rhinovirus 2 uncoating.</title>
        <authorList>
            <person name="Hewat E.A."/>
            <person name="Neumann E."/>
            <person name="Blaas D."/>
        </authorList>
    </citation>
    <scope>FUNCTION (CAPSID PROTEIN VP1)</scope>
    <scope>FUNCTION (CAPSID PROTEIN VP4)</scope>
</reference>
<reference key="6">
    <citation type="journal article" date="2006" name="J. Virol.">
        <title>Effects of picornavirus 3A Proteins on Protein Transport and GBF1-dependent COP-I recruitment.</title>
        <authorList>
            <person name="Wessels E."/>
            <person name="Duijsings D."/>
            <person name="Lanke K.H."/>
            <person name="van Dooren S.H."/>
            <person name="Jackson C.L."/>
            <person name="Melchers W.J."/>
            <person name="van Kuppeveld F.J."/>
        </authorList>
    </citation>
    <scope>FUNCTION (PROTEIN 3A)</scope>
    <scope>INTERACTION WITH HOST GBF1 (PROTEIN 3A)</scope>
</reference>
<reference key="7">
    <citation type="journal article" date="2010" name="J. Biol. Chem.">
        <title>Specific cleavage of the nuclear pore complex protein Nup62 by a viral protease.</title>
        <authorList>
            <person name="Park N."/>
            <person name="Skern T."/>
            <person name="Gustin K.E."/>
        </authorList>
    </citation>
    <scope>FUNCTION (PROTEASE 2A)</scope>
</reference>
<reference key="8">
    <citation type="journal article" date="2010" name="Rev. Med. Virol.">
        <title>Uncoating of human rhinoviruses.</title>
        <authorList>
            <person name="Fuchs R."/>
            <person name="Blaas D."/>
        </authorList>
    </citation>
    <scope>REVIEW</scope>
</reference>
<reference key="9">
    <citation type="journal article" date="2012" name="Adv. Virol.">
        <title>Productive entry pathways of human rhinoviruses.</title>
        <authorList>
            <person name="Fuchs R."/>
            <person name="Blaas D."/>
        </authorList>
    </citation>
    <scope>REVIEW</scope>
</reference>
<reference key="10">
    <citation type="journal article" date="2019" name="MBio">
        <title>ACBD3 is an essential pan-enterovirus host factor that mediates the interaction between viral 3A protein and cellular protein PI4KB.</title>
        <authorList>
            <person name="Lyoo H."/>
            <person name="van der Schaar H.M."/>
            <person name="Dorobantu C.M."/>
            <person name="Rabouw H.H."/>
            <person name="Strating J.R.P.M."/>
            <person name="van Kuppeveld F.J.M."/>
        </authorList>
    </citation>
    <scope>FUNCTION (PROTEIN 3A)</scope>
</reference>
<reference key="11">
    <citation type="journal article" date="1992" name="Protein Sci.">
        <title>Three-dimensional structure of the Fab fragment of a neutralizing antibody to human rhinovirus serotype 2.</title>
        <authorList>
            <person name="Tormo J."/>
            <person name="Stadler E."/>
            <person name="Skern T."/>
            <person name="Auer H."/>
            <person name="Kanzler O."/>
            <person name="Betzel C."/>
            <person name="Blaas D."/>
            <person name="Fita I."/>
        </authorList>
    </citation>
    <scope>X-RAY CRYSTALLOGRAPHY (2.1 ANGSTROMS) OF 225-239</scope>
</reference>
<reference key="12">
    <citation type="journal article" date="1999" name="EMBO J.">
        <title>The structure of the 2A proteinase from a common cold virus: a proteinase responsible for the shut-off of host-cell protein synthesis.</title>
        <authorList>
            <person name="Petersen J.F."/>
            <person name="Cherney M.M."/>
            <person name="Liebig H.D."/>
            <person name="Skern T."/>
            <person name="Kuechler E."/>
            <person name="James M.N."/>
        </authorList>
    </citation>
    <scope>X-RAY CRYSTALLOGRAPHY (1.95 ANGSTROMS) OF 851-992</scope>
</reference>
<reference key="13">
    <citation type="journal article" date="1999" name="Proc. Natl. Acad. Sci. U.S.A.">
        <title>Structure-assisted design of mechanism-based irreversible inhibitors of human rhinovirus 3C protease with potent antiviral activity against multiple rhinovirus serotypes.</title>
        <authorList>
            <person name="Matthews D.A."/>
            <person name="Dragovich P.S."/>
            <person name="Webber S.E."/>
            <person name="Fuhrman S.A."/>
            <person name="Patick A.K."/>
            <person name="Zalman L.S."/>
            <person name="Hendrickson T.F."/>
            <person name="Love R.A."/>
            <person name="Prins T.J."/>
            <person name="Marakovits J.T."/>
            <person name="Zhou R."/>
            <person name="Tikhe J."/>
            <person name="Ford C.E."/>
            <person name="Meador J.W."/>
            <person name="Ferre R.A."/>
            <person name="Brown E.L."/>
            <person name="Binford S.L."/>
            <person name="Brothers M.A."/>
            <person name="DeLisle D.M."/>
            <person name="Worland S.T."/>
        </authorList>
    </citation>
    <scope>X-RAY CRYSTALLOGRAPHY (1.85 ANGSTROMS) OF 1508-1687</scope>
</reference>
<reference key="14">
    <citation type="journal article" date="2000" name="J. Mol. Biol.">
        <title>Structure of human rhinovirus serotype 2 (HRV2).</title>
        <authorList>
            <person name="Verdaguer N."/>
            <person name="Blaas D."/>
            <person name="Fita I."/>
        </authorList>
    </citation>
    <scope>X-RAY CRYSTALLOGRAPHY (2.6 ANGSTROMS) OF 71-856</scope>
</reference>
<name>POLG_HRV2</name>
<proteinExistence type="evidence at protein level"/>
<dbReference type="EC" id="3.4.22.29" evidence="2"/>
<dbReference type="EC" id="3.6.1.15" evidence="2"/>
<dbReference type="EC" id="3.4.22.28" evidence="10"/>
<dbReference type="EC" id="2.7.7.48" evidence="8"/>
<dbReference type="EMBL" id="X02316">
    <property type="protein sequence ID" value="CAA26181.1"/>
    <property type="molecule type" value="Genomic_RNA"/>
</dbReference>
<dbReference type="PIR" id="A03902">
    <property type="entry name" value="GNNYH2"/>
</dbReference>
<dbReference type="PDB" id="1A3R">
    <property type="method" value="X-ray"/>
    <property type="resolution" value="2.10 A"/>
    <property type="chains" value="P=225-239"/>
</dbReference>
<dbReference type="PDB" id="1CQQ">
    <property type="method" value="X-ray"/>
    <property type="resolution" value="1.85 A"/>
    <property type="chains" value="A=1508-1687"/>
</dbReference>
<dbReference type="PDB" id="1FPN">
    <property type="method" value="X-ray"/>
    <property type="resolution" value="2.60 A"/>
    <property type="chains" value="1=568-856, 2=70-330, 3=331-567, 4=2-69"/>
</dbReference>
<dbReference type="PDB" id="1V9U">
    <property type="method" value="X-ray"/>
    <property type="resolution" value="3.60 A"/>
    <property type="chains" value="1=568-856, 2=70-330, 3=331-567, 4=2-69"/>
</dbReference>
<dbReference type="PDB" id="2HRV">
    <property type="method" value="X-ray"/>
    <property type="resolution" value="1.95 A"/>
    <property type="chains" value="A/B=851-992"/>
</dbReference>
<dbReference type="PDB" id="2XYA">
    <property type="method" value="X-ray"/>
    <property type="resolution" value="2.40 A"/>
    <property type="chains" value="A=1508-1687"/>
</dbReference>
<dbReference type="PDB" id="3DPR">
    <property type="method" value="X-ray"/>
    <property type="resolution" value="3.50 A"/>
    <property type="chains" value="A=568-856, B=70-330, C=331-567, D=2-69"/>
</dbReference>
<dbReference type="PDB" id="3TN9">
    <property type="method" value="X-ray"/>
    <property type="resolution" value="3.00 A"/>
    <property type="chains" value="1=568-856, 2=70-330, 3=331-567"/>
</dbReference>
<dbReference type="PDB" id="3VDD">
    <property type="method" value="X-ray"/>
    <property type="resolution" value="3.20 A"/>
    <property type="chains" value="A=568-850, B=70-330, C=331-567, D=1-69"/>
</dbReference>
<dbReference type="PDB" id="4L3B">
    <property type="method" value="X-ray"/>
    <property type="resolution" value="6.50 A"/>
    <property type="chains" value="A=568-856, B=70-330, C=331-567"/>
</dbReference>
<dbReference type="PDB" id="5FX5">
    <property type="method" value="X-ray"/>
    <property type="resolution" value="1.70 A"/>
    <property type="chains" value="A=1508-1687"/>
</dbReference>
<dbReference type="PDB" id="5FX6">
    <property type="method" value="X-ray"/>
    <property type="resolution" value="1.45 A"/>
    <property type="chains" value="A=1508-1687"/>
</dbReference>
<dbReference type="PDB" id="6FFN">
    <property type="method" value="X-ray"/>
    <property type="resolution" value="1.75 A"/>
    <property type="chains" value="A=1508-1687"/>
</dbReference>
<dbReference type="PDB" id="6FFS">
    <property type="method" value="X-ray"/>
    <property type="resolution" value="1.86 A"/>
    <property type="chains" value="A=1508-1687"/>
</dbReference>
<dbReference type="PDB" id="7ARA">
    <property type="method" value="X-ray"/>
    <property type="resolution" value="2.24 A"/>
    <property type="chains" value="A/B=851-992"/>
</dbReference>
<dbReference type="PDBsum" id="1A3R"/>
<dbReference type="PDBsum" id="1CQQ"/>
<dbReference type="PDBsum" id="1FPN"/>
<dbReference type="PDBsum" id="1V9U"/>
<dbReference type="PDBsum" id="2HRV"/>
<dbReference type="PDBsum" id="2XYA"/>
<dbReference type="PDBsum" id="3DPR"/>
<dbReference type="PDBsum" id="3TN9"/>
<dbReference type="PDBsum" id="3VDD"/>
<dbReference type="PDBsum" id="4L3B"/>
<dbReference type="PDBsum" id="5FX5"/>
<dbReference type="PDBsum" id="5FX6"/>
<dbReference type="PDBsum" id="6FFN"/>
<dbReference type="PDBsum" id="6FFS"/>
<dbReference type="PDBsum" id="7ARA"/>
<dbReference type="EMDB" id="EMD-15710"/>
<dbReference type="EMDB" id="EMD-15711"/>
<dbReference type="EMDB" id="EMD-50930"/>
<dbReference type="SMR" id="P04936"/>
<dbReference type="DrugBank" id="DB02313">
    <property type="generic name" value="Ethyl (4R)-4-{[(2R,5S)-2-(4-fluorobenzyl)-6-methyl-5-{[(5-methyl-1,2-oxazol-3-yl)carbonyl]amino}-4-oxoheptanoyl]amino}-5-[(3S)-2-oxo-3-pyrrolidinyl]pentanoate"/>
</dbReference>
<dbReference type="DrugBank" id="DB03017">
    <property type="generic name" value="Lauric acid"/>
</dbReference>
<dbReference type="DrugBank" id="DB05102">
    <property type="generic name" value="Rupintrivir"/>
</dbReference>
<dbReference type="MEROPS" id="C03.007"/>
<dbReference type="MEROPS" id="C03.021"/>
<dbReference type="MEROPS" id="N08.001"/>
<dbReference type="ABCD" id="P04936">
    <property type="antibodies" value="1 sequenced antibody"/>
</dbReference>
<dbReference type="SABIO-RK" id="P04936"/>
<dbReference type="EvolutionaryTrace" id="P04936"/>
<dbReference type="Proteomes" id="UP000007682">
    <property type="component" value="Genome"/>
</dbReference>
<dbReference type="GO" id="GO:0044162">
    <property type="term" value="C:host cell cytoplasmic vesicle membrane"/>
    <property type="evidence" value="ECO:0007669"/>
    <property type="project" value="UniProtKB-SubCell"/>
</dbReference>
<dbReference type="GO" id="GO:0042025">
    <property type="term" value="C:host cell nucleus"/>
    <property type="evidence" value="ECO:0007669"/>
    <property type="project" value="UniProtKB-SubCell"/>
</dbReference>
<dbReference type="GO" id="GO:0016020">
    <property type="term" value="C:membrane"/>
    <property type="evidence" value="ECO:0007669"/>
    <property type="project" value="UniProtKB-KW"/>
</dbReference>
<dbReference type="GO" id="GO:0039618">
    <property type="term" value="C:T=pseudo3 icosahedral viral capsid"/>
    <property type="evidence" value="ECO:0007669"/>
    <property type="project" value="UniProtKB-KW"/>
</dbReference>
<dbReference type="GO" id="GO:0005524">
    <property type="term" value="F:ATP binding"/>
    <property type="evidence" value="ECO:0007669"/>
    <property type="project" value="UniProtKB-KW"/>
</dbReference>
<dbReference type="GO" id="GO:0015267">
    <property type="term" value="F:channel activity"/>
    <property type="evidence" value="ECO:0007669"/>
    <property type="project" value="UniProtKB-KW"/>
</dbReference>
<dbReference type="GO" id="GO:0004197">
    <property type="term" value="F:cysteine-type endopeptidase activity"/>
    <property type="evidence" value="ECO:0007669"/>
    <property type="project" value="UniProtKB-EC"/>
</dbReference>
<dbReference type="GO" id="GO:0017111">
    <property type="term" value="F:ribonucleoside triphosphate phosphatase activity"/>
    <property type="evidence" value="ECO:0007669"/>
    <property type="project" value="UniProtKB-EC"/>
</dbReference>
<dbReference type="GO" id="GO:0003723">
    <property type="term" value="F:RNA binding"/>
    <property type="evidence" value="ECO:0007669"/>
    <property type="project" value="UniProtKB-KW"/>
</dbReference>
<dbReference type="GO" id="GO:0003724">
    <property type="term" value="F:RNA helicase activity"/>
    <property type="evidence" value="ECO:0007669"/>
    <property type="project" value="InterPro"/>
</dbReference>
<dbReference type="GO" id="GO:0003968">
    <property type="term" value="F:RNA-directed RNA polymerase activity"/>
    <property type="evidence" value="ECO:0007669"/>
    <property type="project" value="UniProtKB-KW"/>
</dbReference>
<dbReference type="GO" id="GO:0005198">
    <property type="term" value="F:structural molecule activity"/>
    <property type="evidence" value="ECO:0007669"/>
    <property type="project" value="InterPro"/>
</dbReference>
<dbReference type="GO" id="GO:0008270">
    <property type="term" value="F:zinc ion binding"/>
    <property type="evidence" value="ECO:0007669"/>
    <property type="project" value="UniProtKB-KW"/>
</dbReference>
<dbReference type="GO" id="GO:0006260">
    <property type="term" value="P:DNA replication"/>
    <property type="evidence" value="ECO:0007669"/>
    <property type="project" value="UniProtKB-KW"/>
</dbReference>
<dbReference type="GO" id="GO:0006351">
    <property type="term" value="P:DNA-templated transcription"/>
    <property type="evidence" value="ECO:0007669"/>
    <property type="project" value="InterPro"/>
</dbReference>
<dbReference type="GO" id="GO:0075509">
    <property type="term" value="P:endocytosis involved in viral entry into host cell"/>
    <property type="evidence" value="ECO:0007669"/>
    <property type="project" value="UniProtKB-KW"/>
</dbReference>
<dbReference type="GO" id="GO:0034220">
    <property type="term" value="P:monoatomic ion transmembrane transport"/>
    <property type="evidence" value="ECO:0007669"/>
    <property type="project" value="UniProtKB-KW"/>
</dbReference>
<dbReference type="GO" id="GO:0006508">
    <property type="term" value="P:proteolysis"/>
    <property type="evidence" value="ECO:0007669"/>
    <property type="project" value="UniProtKB-KW"/>
</dbReference>
<dbReference type="GO" id="GO:0044694">
    <property type="term" value="P:symbiont genome entry into host cell via pore formation in plasma membrane"/>
    <property type="evidence" value="ECO:0007669"/>
    <property type="project" value="UniProtKB-KW"/>
</dbReference>
<dbReference type="GO" id="GO:0039520">
    <property type="term" value="P:symbiont-mediated activation of host autophagy"/>
    <property type="evidence" value="ECO:0000314"/>
    <property type="project" value="UniProtKB"/>
</dbReference>
<dbReference type="GO" id="GO:0039540">
    <property type="term" value="P:symbiont-mediated suppression of host cytoplasmic pattern recognition receptor signaling pathway via inhibition of RIG-I activity"/>
    <property type="evidence" value="ECO:0007669"/>
    <property type="project" value="UniProtKB-KW"/>
</dbReference>
<dbReference type="GO" id="GO:0039522">
    <property type="term" value="P:symbiont-mediated suppression of host mRNA export from nucleus"/>
    <property type="evidence" value="ECO:0007669"/>
    <property type="project" value="UniProtKB-KW"/>
</dbReference>
<dbReference type="GO" id="GO:0039694">
    <property type="term" value="P:viral RNA genome replication"/>
    <property type="evidence" value="ECO:0007669"/>
    <property type="project" value="InterPro"/>
</dbReference>
<dbReference type="GO" id="GO:0019062">
    <property type="term" value="P:virion attachment to host cell"/>
    <property type="evidence" value="ECO:0007669"/>
    <property type="project" value="UniProtKB-KW"/>
</dbReference>
<dbReference type="CDD" id="cd00205">
    <property type="entry name" value="rhv_like"/>
    <property type="match status" value="3"/>
</dbReference>
<dbReference type="FunFam" id="2.40.10.10:FF:000020">
    <property type="entry name" value="Genome polyprotein"/>
    <property type="match status" value="1"/>
</dbReference>
<dbReference type="FunFam" id="2.60.120.20:FF:000001">
    <property type="entry name" value="Genome polyprotein"/>
    <property type="match status" value="1"/>
</dbReference>
<dbReference type="FunFam" id="2.60.120.20:FF:000002">
    <property type="entry name" value="Genome polyprotein"/>
    <property type="match status" value="1"/>
</dbReference>
<dbReference type="FunFam" id="2.60.120.20:FF:000003">
    <property type="entry name" value="Genome polyprotein"/>
    <property type="match status" value="1"/>
</dbReference>
<dbReference type="Gene3D" id="1.20.960.20">
    <property type="match status" value="1"/>
</dbReference>
<dbReference type="Gene3D" id="2.40.10.120">
    <property type="match status" value="1"/>
</dbReference>
<dbReference type="Gene3D" id="2.60.120.20">
    <property type="match status" value="3"/>
</dbReference>
<dbReference type="Gene3D" id="3.30.70.270">
    <property type="match status" value="1"/>
</dbReference>
<dbReference type="Gene3D" id="3.40.50.300">
    <property type="entry name" value="P-loop containing nucleotide triphosphate hydrolases"/>
    <property type="match status" value="1"/>
</dbReference>
<dbReference type="Gene3D" id="6.10.20.20">
    <property type="entry name" value="Poliovirus 3A protein-like"/>
    <property type="match status" value="1"/>
</dbReference>
<dbReference type="Gene3D" id="4.10.880.10">
    <property type="entry name" value="Poliovirus 3D polymerase Domain 1 (Nucleotidyltransferase)"/>
    <property type="match status" value="2"/>
</dbReference>
<dbReference type="Gene3D" id="2.40.10.10">
    <property type="entry name" value="Trypsin-like serine proteases"/>
    <property type="match status" value="2"/>
</dbReference>
<dbReference type="InterPro" id="IPR043502">
    <property type="entry name" value="DNA/RNA_pol_sf"/>
</dbReference>
<dbReference type="InterPro" id="IPR000605">
    <property type="entry name" value="Helicase_SF3_ssDNA/RNA_vir"/>
</dbReference>
<dbReference type="InterPro" id="IPR014759">
    <property type="entry name" value="Helicase_SF3_ssRNA_vir"/>
</dbReference>
<dbReference type="InterPro" id="IPR027417">
    <property type="entry name" value="P-loop_NTPase"/>
</dbReference>
<dbReference type="InterPro" id="IPR014838">
    <property type="entry name" value="P3A"/>
</dbReference>
<dbReference type="InterPro" id="IPR036203">
    <property type="entry name" value="P3A_soluble_dom"/>
</dbReference>
<dbReference type="InterPro" id="IPR044067">
    <property type="entry name" value="PCV_3C_PRO"/>
</dbReference>
<dbReference type="InterPro" id="IPR000081">
    <property type="entry name" value="Peptidase_C3"/>
</dbReference>
<dbReference type="InterPro" id="IPR000199">
    <property type="entry name" value="Peptidase_C3A/C3B_picornavir"/>
</dbReference>
<dbReference type="InterPro" id="IPR009003">
    <property type="entry name" value="Peptidase_S1_PA"/>
</dbReference>
<dbReference type="InterPro" id="IPR043504">
    <property type="entry name" value="Peptidase_S1_PA_chymotrypsin"/>
</dbReference>
<dbReference type="InterPro" id="IPR003138">
    <property type="entry name" value="Pico_P1A"/>
</dbReference>
<dbReference type="InterPro" id="IPR002527">
    <property type="entry name" value="Pico_P2B"/>
</dbReference>
<dbReference type="InterPro" id="IPR001676">
    <property type="entry name" value="Picornavirus_capsid"/>
</dbReference>
<dbReference type="InterPro" id="IPR043128">
    <property type="entry name" value="Rev_trsase/Diguanyl_cyclase"/>
</dbReference>
<dbReference type="InterPro" id="IPR033703">
    <property type="entry name" value="Rhv-like"/>
</dbReference>
<dbReference type="InterPro" id="IPR001205">
    <property type="entry name" value="RNA-dir_pol_C"/>
</dbReference>
<dbReference type="InterPro" id="IPR007094">
    <property type="entry name" value="RNA-dir_pol_PSvirus"/>
</dbReference>
<dbReference type="InterPro" id="IPR029053">
    <property type="entry name" value="Viral_coat"/>
</dbReference>
<dbReference type="Pfam" id="PF08727">
    <property type="entry name" value="P3A"/>
    <property type="match status" value="1"/>
</dbReference>
<dbReference type="Pfam" id="PF00548">
    <property type="entry name" value="Peptidase_C3"/>
    <property type="match status" value="1"/>
</dbReference>
<dbReference type="Pfam" id="PF02226">
    <property type="entry name" value="Pico_P1A"/>
    <property type="match status" value="1"/>
</dbReference>
<dbReference type="Pfam" id="PF00947">
    <property type="entry name" value="Pico_P2A"/>
    <property type="match status" value="1"/>
</dbReference>
<dbReference type="Pfam" id="PF01552">
    <property type="entry name" value="Pico_P2B"/>
    <property type="match status" value="1"/>
</dbReference>
<dbReference type="Pfam" id="PF00680">
    <property type="entry name" value="RdRP_1"/>
    <property type="match status" value="1"/>
</dbReference>
<dbReference type="Pfam" id="PF00073">
    <property type="entry name" value="Rhv"/>
    <property type="match status" value="3"/>
</dbReference>
<dbReference type="Pfam" id="PF00910">
    <property type="entry name" value="RNA_helicase"/>
    <property type="match status" value="1"/>
</dbReference>
<dbReference type="SUPFAM" id="SSF56672">
    <property type="entry name" value="DNA/RNA polymerases"/>
    <property type="match status" value="1"/>
</dbReference>
<dbReference type="SUPFAM" id="SSF52540">
    <property type="entry name" value="P-loop containing nucleoside triphosphate hydrolases"/>
    <property type="match status" value="1"/>
</dbReference>
<dbReference type="SUPFAM" id="SSF88633">
    <property type="entry name" value="Positive stranded ssRNA viruses"/>
    <property type="match status" value="2"/>
</dbReference>
<dbReference type="SUPFAM" id="SSF89043">
    <property type="entry name" value="Soluble domain of poliovirus core protein 3a"/>
    <property type="match status" value="1"/>
</dbReference>
<dbReference type="SUPFAM" id="SSF50494">
    <property type="entry name" value="Trypsin-like serine proteases"/>
    <property type="match status" value="2"/>
</dbReference>
<dbReference type="PROSITE" id="PS51874">
    <property type="entry name" value="PCV_3C_PRO"/>
    <property type="match status" value="1"/>
</dbReference>
<dbReference type="PROSITE" id="PS50507">
    <property type="entry name" value="RDRP_SSRNA_POS"/>
    <property type="match status" value="1"/>
</dbReference>
<dbReference type="PROSITE" id="PS51218">
    <property type="entry name" value="SF3_HELICASE_2"/>
    <property type="match status" value="1"/>
</dbReference>
<organism>
    <name type="scientific">Human rhinovirus 2</name>
    <name type="common">HRV-2</name>
    <dbReference type="NCBI Taxonomy" id="12130"/>
    <lineage>
        <taxon>Viruses</taxon>
        <taxon>Riboviria</taxon>
        <taxon>Orthornavirae</taxon>
        <taxon>Pisuviricota</taxon>
        <taxon>Pisoniviricetes</taxon>
        <taxon>Picornavirales</taxon>
        <taxon>Picornaviridae</taxon>
        <taxon>Ensavirinae</taxon>
        <taxon>Enterovirus</taxon>
        <taxon>Rhinovirus A</taxon>
    </lineage>
</organism>